<proteinExistence type="inferred from homology"/>
<reference key="1">
    <citation type="journal article" date="2004" name="Proc. Natl. Acad. Sci. U.S.A.">
        <title>Genome sequence of the enterobacterial phytopathogen Erwinia carotovora subsp. atroseptica and characterization of virulence factors.</title>
        <authorList>
            <person name="Bell K.S."/>
            <person name="Sebaihia M."/>
            <person name="Pritchard L."/>
            <person name="Holden M.T.G."/>
            <person name="Hyman L.J."/>
            <person name="Holeva M.C."/>
            <person name="Thomson N.R."/>
            <person name="Bentley S.D."/>
            <person name="Churcher L.J.C."/>
            <person name="Mungall K."/>
            <person name="Atkin R."/>
            <person name="Bason N."/>
            <person name="Brooks K."/>
            <person name="Chillingworth T."/>
            <person name="Clark K."/>
            <person name="Doggett J."/>
            <person name="Fraser A."/>
            <person name="Hance Z."/>
            <person name="Hauser H."/>
            <person name="Jagels K."/>
            <person name="Moule S."/>
            <person name="Norbertczak H."/>
            <person name="Ormond D."/>
            <person name="Price C."/>
            <person name="Quail M.A."/>
            <person name="Sanders M."/>
            <person name="Walker D."/>
            <person name="Whitehead S."/>
            <person name="Salmond G.P.C."/>
            <person name="Birch P.R.J."/>
            <person name="Parkhill J."/>
            <person name="Toth I.K."/>
        </authorList>
    </citation>
    <scope>NUCLEOTIDE SEQUENCE [LARGE SCALE GENOMIC DNA]</scope>
    <source>
        <strain>SCRI 1043 / ATCC BAA-672</strain>
    </source>
</reference>
<accession>Q6D9D3</accession>
<keyword id="KW-0012">Acyltransferase</keyword>
<keyword id="KW-0963">Cytoplasm</keyword>
<keyword id="KW-0408">Iron</keyword>
<keyword id="KW-0479">Metal-binding</keyword>
<keyword id="KW-1185">Reference proteome</keyword>
<keyword id="KW-0808">Transferase</keyword>
<keyword id="KW-0819">tRNA processing</keyword>
<evidence type="ECO:0000255" key="1">
    <source>
        <dbReference type="HAMAP-Rule" id="MF_01445"/>
    </source>
</evidence>
<organism>
    <name type="scientific">Pectobacterium atrosepticum (strain SCRI 1043 / ATCC BAA-672)</name>
    <name type="common">Erwinia carotovora subsp. atroseptica</name>
    <dbReference type="NCBI Taxonomy" id="218491"/>
    <lineage>
        <taxon>Bacteria</taxon>
        <taxon>Pseudomonadati</taxon>
        <taxon>Pseudomonadota</taxon>
        <taxon>Gammaproteobacteria</taxon>
        <taxon>Enterobacterales</taxon>
        <taxon>Pectobacteriaceae</taxon>
        <taxon>Pectobacterium</taxon>
    </lineage>
</organism>
<name>TSAD_PECAS</name>
<comment type="function">
    <text evidence="1">Required for the formation of a threonylcarbamoyl group on adenosine at position 37 (t(6)A37) in tRNAs that read codons beginning with adenine. Is involved in the transfer of the threonylcarbamoyl moiety of threonylcarbamoyl-AMP (TC-AMP) to the N6 group of A37, together with TsaE and TsaB. TsaD likely plays a direct catalytic role in this reaction.</text>
</comment>
<comment type="catalytic activity">
    <reaction evidence="1">
        <text>L-threonylcarbamoyladenylate + adenosine(37) in tRNA = N(6)-L-threonylcarbamoyladenosine(37) in tRNA + AMP + H(+)</text>
        <dbReference type="Rhea" id="RHEA:37059"/>
        <dbReference type="Rhea" id="RHEA-COMP:10162"/>
        <dbReference type="Rhea" id="RHEA-COMP:10163"/>
        <dbReference type="ChEBI" id="CHEBI:15378"/>
        <dbReference type="ChEBI" id="CHEBI:73682"/>
        <dbReference type="ChEBI" id="CHEBI:74411"/>
        <dbReference type="ChEBI" id="CHEBI:74418"/>
        <dbReference type="ChEBI" id="CHEBI:456215"/>
        <dbReference type="EC" id="2.3.1.234"/>
    </reaction>
</comment>
<comment type="cofactor">
    <cofactor evidence="1">
        <name>Fe(2+)</name>
        <dbReference type="ChEBI" id="CHEBI:29033"/>
    </cofactor>
    <text evidence="1">Binds 1 Fe(2+) ion per subunit.</text>
</comment>
<comment type="subcellular location">
    <subcellularLocation>
        <location evidence="1">Cytoplasm</location>
    </subcellularLocation>
</comment>
<comment type="similarity">
    <text evidence="1">Belongs to the KAE1 / TsaD family.</text>
</comment>
<dbReference type="EC" id="2.3.1.234" evidence="1"/>
<dbReference type="EMBL" id="BX950851">
    <property type="protein sequence ID" value="CAG73597.1"/>
    <property type="molecule type" value="Genomic_DNA"/>
</dbReference>
<dbReference type="RefSeq" id="WP_011092298.1">
    <property type="nucleotide sequence ID" value="NC_004547.2"/>
</dbReference>
<dbReference type="SMR" id="Q6D9D3"/>
<dbReference type="STRING" id="218491.ECA0683"/>
<dbReference type="GeneID" id="57207417"/>
<dbReference type="KEGG" id="eca:ECA0683"/>
<dbReference type="PATRIC" id="fig|218491.5.peg.679"/>
<dbReference type="eggNOG" id="COG0533">
    <property type="taxonomic scope" value="Bacteria"/>
</dbReference>
<dbReference type="HOGENOM" id="CLU_023208_0_2_6"/>
<dbReference type="OrthoDB" id="9806197at2"/>
<dbReference type="Proteomes" id="UP000007966">
    <property type="component" value="Chromosome"/>
</dbReference>
<dbReference type="GO" id="GO:0005737">
    <property type="term" value="C:cytoplasm"/>
    <property type="evidence" value="ECO:0007669"/>
    <property type="project" value="UniProtKB-SubCell"/>
</dbReference>
<dbReference type="GO" id="GO:0005506">
    <property type="term" value="F:iron ion binding"/>
    <property type="evidence" value="ECO:0007669"/>
    <property type="project" value="UniProtKB-UniRule"/>
</dbReference>
<dbReference type="GO" id="GO:0061711">
    <property type="term" value="F:N(6)-L-threonylcarbamoyladenine synthase activity"/>
    <property type="evidence" value="ECO:0007669"/>
    <property type="project" value="UniProtKB-EC"/>
</dbReference>
<dbReference type="GO" id="GO:0002949">
    <property type="term" value="P:tRNA threonylcarbamoyladenosine modification"/>
    <property type="evidence" value="ECO:0007669"/>
    <property type="project" value="UniProtKB-UniRule"/>
</dbReference>
<dbReference type="CDD" id="cd24133">
    <property type="entry name" value="ASKHA_NBD_TsaD_bac"/>
    <property type="match status" value="1"/>
</dbReference>
<dbReference type="FunFam" id="3.30.420.40:FF:000031">
    <property type="entry name" value="tRNA N6-adenosine threonylcarbamoyltransferase"/>
    <property type="match status" value="1"/>
</dbReference>
<dbReference type="Gene3D" id="3.30.420.40">
    <property type="match status" value="2"/>
</dbReference>
<dbReference type="HAMAP" id="MF_01445">
    <property type="entry name" value="TsaD"/>
    <property type="match status" value="1"/>
</dbReference>
<dbReference type="InterPro" id="IPR043129">
    <property type="entry name" value="ATPase_NBD"/>
</dbReference>
<dbReference type="InterPro" id="IPR000905">
    <property type="entry name" value="Gcp-like_dom"/>
</dbReference>
<dbReference type="InterPro" id="IPR017861">
    <property type="entry name" value="KAE1/TsaD"/>
</dbReference>
<dbReference type="InterPro" id="IPR022450">
    <property type="entry name" value="TsaD"/>
</dbReference>
<dbReference type="NCBIfam" id="TIGR00329">
    <property type="entry name" value="gcp_kae1"/>
    <property type="match status" value="1"/>
</dbReference>
<dbReference type="NCBIfam" id="TIGR03723">
    <property type="entry name" value="T6A_TsaD_YgjD"/>
    <property type="match status" value="1"/>
</dbReference>
<dbReference type="PANTHER" id="PTHR11735">
    <property type="entry name" value="TRNA N6-ADENOSINE THREONYLCARBAMOYLTRANSFERASE"/>
    <property type="match status" value="1"/>
</dbReference>
<dbReference type="PANTHER" id="PTHR11735:SF6">
    <property type="entry name" value="TRNA N6-ADENOSINE THREONYLCARBAMOYLTRANSFERASE, MITOCHONDRIAL"/>
    <property type="match status" value="1"/>
</dbReference>
<dbReference type="Pfam" id="PF00814">
    <property type="entry name" value="TsaD"/>
    <property type="match status" value="1"/>
</dbReference>
<dbReference type="PRINTS" id="PR00789">
    <property type="entry name" value="OSIALOPTASE"/>
</dbReference>
<dbReference type="SUPFAM" id="SSF53067">
    <property type="entry name" value="Actin-like ATPase domain"/>
    <property type="match status" value="1"/>
</dbReference>
<feature type="chain" id="PRO_0000303357" description="tRNA N6-adenosine threonylcarbamoyltransferase">
    <location>
        <begin position="1"/>
        <end position="337"/>
    </location>
</feature>
<feature type="binding site" evidence="1">
    <location>
        <position position="111"/>
    </location>
    <ligand>
        <name>Fe cation</name>
        <dbReference type="ChEBI" id="CHEBI:24875"/>
    </ligand>
</feature>
<feature type="binding site" evidence="1">
    <location>
        <position position="115"/>
    </location>
    <ligand>
        <name>Fe cation</name>
        <dbReference type="ChEBI" id="CHEBI:24875"/>
    </ligand>
</feature>
<feature type="binding site" evidence="1">
    <location>
        <begin position="134"/>
        <end position="138"/>
    </location>
    <ligand>
        <name>substrate</name>
    </ligand>
</feature>
<feature type="binding site" evidence="1">
    <location>
        <position position="167"/>
    </location>
    <ligand>
        <name>substrate</name>
    </ligand>
</feature>
<feature type="binding site" evidence="1">
    <location>
        <position position="180"/>
    </location>
    <ligand>
        <name>substrate</name>
    </ligand>
</feature>
<feature type="binding site" evidence="1">
    <location>
        <position position="272"/>
    </location>
    <ligand>
        <name>substrate</name>
    </ligand>
</feature>
<feature type="binding site" evidence="1">
    <location>
        <position position="300"/>
    </location>
    <ligand>
        <name>Fe cation</name>
        <dbReference type="ChEBI" id="CHEBI:24875"/>
    </ligand>
</feature>
<sequence length="337" mass="35852">MRVLGIETSCDETGVAIYDTEAGLLANQLYSQVKLHADYGGVVPELASRDHVRKTVPLIQAALREAGLQADDIDGVAYTAGPGLVGALLVGATVGRSLAFAWEVPAVPVHHMEGHLLAPMLEDNPPAFPFVALLVSGGHTQLISVTGIGEYRLLGESVDDAAGEAFDKTAKLLGLDYPGGPMLSKMAQAGDSQRFTFPRPMTDRPGLDFSFSGLKTFAANTIRSNGDDDQTRADIARAFEDAVVDTLAIKCRRALDDTGFKRLVMAGGVSANRTLRQRLGEVMAKRGGEVFYARPEFCTDNGAMIAYAGSVRLLHGASQTLGVSVRPRWPLADLPAV</sequence>
<protein>
    <recommendedName>
        <fullName evidence="1">tRNA N6-adenosine threonylcarbamoyltransferase</fullName>
        <ecNumber evidence="1">2.3.1.234</ecNumber>
    </recommendedName>
    <alternativeName>
        <fullName evidence="1">N6-L-threonylcarbamoyladenine synthase</fullName>
        <shortName evidence="1">t(6)A synthase</shortName>
    </alternativeName>
    <alternativeName>
        <fullName evidence="1">t(6)A37 threonylcarbamoyladenosine biosynthesis protein TsaD</fullName>
    </alternativeName>
    <alternativeName>
        <fullName evidence="1">tRNA threonylcarbamoyladenosine biosynthesis protein TsaD</fullName>
    </alternativeName>
</protein>
<gene>
    <name evidence="1" type="primary">tsaD</name>
    <name type="synonym">gcp</name>
    <name type="ordered locus">ECA0683</name>
</gene>